<name>HTR4_PYRO7</name>
<sequence length="116" mass="13025">MHIIHISKFMALLAISTIAIPTRGRSEVDSRDVNQAQTVTSGSSIAPSGSEKRPAWKAEFAEQIAEAQRDKKPFQCPHCKDGISNRVALYTHVKAFHGDKPVYSLKNYHDERRFDS</sequence>
<protein>
    <recommendedName>
        <fullName evidence="5">Host transcription reprogramming factor 4</fullName>
    </recommendedName>
    <alternativeName>
        <fullName evidence="5">Secreted nuclear effector HTR4</fullName>
    </alternativeName>
</protein>
<gene>
    <name evidence="5" type="primary">HTR4</name>
    <name type="ORF">MGG_05518</name>
</gene>
<reference key="1">
    <citation type="journal article" date="2005" name="Nature">
        <title>The genome sequence of the rice blast fungus Magnaporthe grisea.</title>
        <authorList>
            <person name="Dean R.A."/>
            <person name="Talbot N.J."/>
            <person name="Ebbole D.J."/>
            <person name="Farman M.L."/>
            <person name="Mitchell T.K."/>
            <person name="Orbach M.J."/>
            <person name="Thon M.R."/>
            <person name="Kulkarni R."/>
            <person name="Xu J.-R."/>
            <person name="Pan H."/>
            <person name="Read N.D."/>
            <person name="Lee Y.-H."/>
            <person name="Carbone I."/>
            <person name="Brown D."/>
            <person name="Oh Y.Y."/>
            <person name="Donofrio N."/>
            <person name="Jeong J.S."/>
            <person name="Soanes D.M."/>
            <person name="Djonovic S."/>
            <person name="Kolomiets E."/>
            <person name="Rehmeyer C."/>
            <person name="Li W."/>
            <person name="Harding M."/>
            <person name="Kim S."/>
            <person name="Lebrun M.-H."/>
            <person name="Bohnert H."/>
            <person name="Coughlan S."/>
            <person name="Butler J."/>
            <person name="Calvo S.E."/>
            <person name="Ma L.-J."/>
            <person name="Nicol R."/>
            <person name="Purcell S."/>
            <person name="Nusbaum C."/>
            <person name="Galagan J.E."/>
            <person name="Birren B.W."/>
        </authorList>
    </citation>
    <scope>NUCLEOTIDE SEQUENCE [LARGE SCALE GENOMIC DNA]</scope>
    <source>
        <strain>70-15 / ATCC MYA-4617 / FGSC 8958</strain>
    </source>
</reference>
<reference key="2">
    <citation type="journal article" date="2020" name="Nat. Commun.">
        <title>Two nuclear effectors of the rice blast fungus modulate host immunity via transcriptional reprogramming.</title>
        <authorList>
            <person name="Kim S."/>
            <person name="Kim C.Y."/>
            <person name="Park S.Y."/>
            <person name="Kim K.T."/>
            <person name="Jeon J."/>
            <person name="Chung H."/>
            <person name="Choi G."/>
            <person name="Kwon S."/>
            <person name="Choi J."/>
            <person name="Jeon J."/>
            <person name="Jeon J.S."/>
            <person name="Khang C.H."/>
            <person name="Kang S."/>
            <person name="Lee Y.H."/>
        </authorList>
    </citation>
    <scope>FUNCTION</scope>
    <scope>INDUCTION</scope>
</reference>
<accession>G4MM89</accession>
<evidence type="ECO:0000255" key="1"/>
<evidence type="ECO:0000255" key="2">
    <source>
        <dbReference type="PROSITE-ProRule" id="PRU00042"/>
    </source>
</evidence>
<evidence type="ECO:0000256" key="3">
    <source>
        <dbReference type="SAM" id="MobiDB-lite"/>
    </source>
</evidence>
<evidence type="ECO:0000269" key="4">
    <source>
    </source>
</evidence>
<evidence type="ECO:0000303" key="5">
    <source>
    </source>
</evidence>
<evidence type="ECO:0000305" key="6">
    <source>
    </source>
</evidence>
<proteinExistence type="evidence at transcript level"/>
<feature type="signal peptide" evidence="1">
    <location>
        <begin position="1"/>
        <end position="24"/>
    </location>
</feature>
<feature type="chain" id="PRO_5003465385" description="Host transcription reprogramming factor 4">
    <location>
        <begin position="25"/>
        <end position="116"/>
    </location>
</feature>
<feature type="zinc finger region" description="C2H2-type; degenerate" evidence="2">
    <location>
        <begin position="74"/>
        <end position="96"/>
    </location>
</feature>
<feature type="region of interest" description="Disordered" evidence="3">
    <location>
        <begin position="24"/>
        <end position="53"/>
    </location>
</feature>
<feature type="compositionally biased region" description="Polar residues" evidence="3">
    <location>
        <begin position="33"/>
        <end position="47"/>
    </location>
</feature>
<keyword id="KW-1048">Host nucleus</keyword>
<keyword id="KW-0479">Metal-binding</keyword>
<keyword id="KW-1185">Reference proteome</keyword>
<keyword id="KW-0964">Secreted</keyword>
<keyword id="KW-0732">Signal</keyword>
<keyword id="KW-0804">Transcription</keyword>
<keyword id="KW-0805">Transcription regulation</keyword>
<keyword id="KW-0843">Virulence</keyword>
<keyword id="KW-0862">Zinc</keyword>
<keyword id="KW-0863">Zinc-finger</keyword>
<comment type="function">
    <text evidence="6">Probable secreted effector that translocates into the nuclei of host cells to reprogram the expression of targeted genes by binding on effector binding elements in rice.</text>
</comment>
<comment type="subcellular location">
    <subcellularLocation>
        <location evidence="1">Secreted</location>
    </subcellularLocation>
    <subcellularLocation>
        <location evidence="6">Host nucleus</location>
    </subcellularLocation>
</comment>
<comment type="induction">
    <text evidence="4">Expressed during multiple stages of host plant infection, including the prepenetration, early biotrophy, late biotrophy, transition and necrotrophy.</text>
</comment>
<dbReference type="EMBL" id="CM001231">
    <property type="protein sequence ID" value="EHA57770.1"/>
    <property type="molecule type" value="Genomic_DNA"/>
</dbReference>
<dbReference type="RefSeq" id="XP_003710382.1">
    <property type="nucleotide sequence ID" value="XM_003710334.1"/>
</dbReference>
<dbReference type="EnsemblFungi" id="MGG_05518T0">
    <property type="protein sequence ID" value="MGG_05518T0"/>
    <property type="gene ID" value="MGG_05518"/>
</dbReference>
<dbReference type="GeneID" id="2675794"/>
<dbReference type="KEGG" id="mgr:MGG_05518"/>
<dbReference type="VEuPathDB" id="FungiDB:MGG_05518"/>
<dbReference type="HOGENOM" id="CLU_2097332_0_0_1"/>
<dbReference type="InParanoid" id="G4MM89"/>
<dbReference type="OrthoDB" id="1095242at2759"/>
<dbReference type="Proteomes" id="UP000009058">
    <property type="component" value="Chromosome 1"/>
</dbReference>
<dbReference type="GO" id="GO:0005576">
    <property type="term" value="C:extracellular region"/>
    <property type="evidence" value="ECO:0007669"/>
    <property type="project" value="UniProtKB-SubCell"/>
</dbReference>
<dbReference type="GO" id="GO:0042025">
    <property type="term" value="C:host cell nucleus"/>
    <property type="evidence" value="ECO:0007669"/>
    <property type="project" value="UniProtKB-SubCell"/>
</dbReference>
<dbReference type="GO" id="GO:0008270">
    <property type="term" value="F:zinc ion binding"/>
    <property type="evidence" value="ECO:0007669"/>
    <property type="project" value="UniProtKB-KW"/>
</dbReference>
<dbReference type="Gene3D" id="3.30.160.60">
    <property type="entry name" value="Classic Zinc Finger"/>
    <property type="match status" value="1"/>
</dbReference>
<dbReference type="InterPro" id="IPR036236">
    <property type="entry name" value="Znf_C2H2_sf"/>
</dbReference>
<dbReference type="InterPro" id="IPR013087">
    <property type="entry name" value="Znf_C2H2_type"/>
</dbReference>
<dbReference type="SUPFAM" id="SSF57667">
    <property type="entry name" value="beta-beta-alpha zinc fingers"/>
    <property type="match status" value="1"/>
</dbReference>
<dbReference type="PROSITE" id="PS00028">
    <property type="entry name" value="ZINC_FINGER_C2H2_1"/>
    <property type="match status" value="1"/>
</dbReference>
<dbReference type="PROSITE" id="PS50157">
    <property type="entry name" value="ZINC_FINGER_C2H2_2"/>
    <property type="match status" value="1"/>
</dbReference>
<organism>
    <name type="scientific">Pyricularia oryzae (strain 70-15 / ATCC MYA-4617 / FGSC 8958)</name>
    <name type="common">Rice blast fungus</name>
    <name type="synonym">Magnaporthe oryzae</name>
    <dbReference type="NCBI Taxonomy" id="242507"/>
    <lineage>
        <taxon>Eukaryota</taxon>
        <taxon>Fungi</taxon>
        <taxon>Dikarya</taxon>
        <taxon>Ascomycota</taxon>
        <taxon>Pezizomycotina</taxon>
        <taxon>Sordariomycetes</taxon>
        <taxon>Sordariomycetidae</taxon>
        <taxon>Magnaporthales</taxon>
        <taxon>Pyriculariaceae</taxon>
        <taxon>Pyricularia</taxon>
    </lineage>
</organism>